<evidence type="ECO:0000269" key="1">
    <source>
    </source>
</evidence>
<evidence type="ECO:0000269" key="2">
    <source>
    </source>
</evidence>
<keyword id="KW-1185">Reference proteome</keyword>
<protein>
    <recommendedName>
        <fullName>Uncharacterized protein Rv1998c</fullName>
    </recommendedName>
</protein>
<proteinExistence type="evidence at protein level"/>
<accession>P9WLN9</accession>
<accession>L0TB19</accession>
<accession>Q10859</accession>
<sequence>MSFHDLHHQGVPFVLPNAWDVPSALAYLAEGFTAIGTTSFGVSSSGGHPDGHRATRGANIALAAALAPLQCYVSVDIEDGYSDEPDAIADYVAQLSTAGINIEDSSAEKLIDPALAAAKIVAIKQRNPEVFVNARVDTYWLRQHADTTSTIQRALRYVDAGADGVFVPLANDPDELAELTRNIPCPVNTLPVPGLTIADLGELGVARVSTGSVPYSAGLYAAAHAARAVSDGEQLPRSVPYAELQARLVDYENRTSTT</sequence>
<organism>
    <name type="scientific">Mycobacterium tuberculosis (strain ATCC 25618 / H37Rv)</name>
    <dbReference type="NCBI Taxonomy" id="83332"/>
    <lineage>
        <taxon>Bacteria</taxon>
        <taxon>Bacillati</taxon>
        <taxon>Actinomycetota</taxon>
        <taxon>Actinomycetes</taxon>
        <taxon>Mycobacteriales</taxon>
        <taxon>Mycobacteriaceae</taxon>
        <taxon>Mycobacterium</taxon>
        <taxon>Mycobacterium tuberculosis complex</taxon>
    </lineage>
</organism>
<dbReference type="EMBL" id="AL123456">
    <property type="protein sequence ID" value="CCP44770.1"/>
    <property type="molecule type" value="Genomic_DNA"/>
</dbReference>
<dbReference type="PIR" id="D70758">
    <property type="entry name" value="D70758"/>
</dbReference>
<dbReference type="RefSeq" id="NP_216514.1">
    <property type="nucleotide sequence ID" value="NC_000962.3"/>
</dbReference>
<dbReference type="RefSeq" id="WP_003899122.1">
    <property type="nucleotide sequence ID" value="NZ_NVQJ01000043.1"/>
</dbReference>
<dbReference type="SMR" id="P9WLN9"/>
<dbReference type="STRING" id="83332.Rv1998c"/>
<dbReference type="PaxDb" id="83332-Rv1998c"/>
<dbReference type="DNASU" id="888853"/>
<dbReference type="GeneID" id="888853"/>
<dbReference type="KEGG" id="mtu:Rv1998c"/>
<dbReference type="KEGG" id="mtv:RVBD_1998c"/>
<dbReference type="TubercuList" id="Rv1998c"/>
<dbReference type="eggNOG" id="COG2513">
    <property type="taxonomic scope" value="Bacteria"/>
</dbReference>
<dbReference type="InParanoid" id="P9WLN9"/>
<dbReference type="OrthoDB" id="9780430at2"/>
<dbReference type="PhylomeDB" id="P9WLN9"/>
<dbReference type="Proteomes" id="UP000001584">
    <property type="component" value="Chromosome"/>
</dbReference>
<dbReference type="GO" id="GO:0003824">
    <property type="term" value="F:catalytic activity"/>
    <property type="evidence" value="ECO:0007669"/>
    <property type="project" value="InterPro"/>
</dbReference>
<dbReference type="CDD" id="cd00377">
    <property type="entry name" value="ICL_PEPM"/>
    <property type="match status" value="1"/>
</dbReference>
<dbReference type="Gene3D" id="3.20.20.60">
    <property type="entry name" value="Phosphoenolpyruvate-binding domains"/>
    <property type="match status" value="1"/>
</dbReference>
<dbReference type="InterPro" id="IPR039556">
    <property type="entry name" value="ICL/PEPM"/>
</dbReference>
<dbReference type="InterPro" id="IPR015813">
    <property type="entry name" value="Pyrv/PenolPyrv_kinase-like_dom"/>
</dbReference>
<dbReference type="InterPro" id="IPR040442">
    <property type="entry name" value="Pyrv_kinase-like_dom_sf"/>
</dbReference>
<dbReference type="PANTHER" id="PTHR42905:SF16">
    <property type="entry name" value="CARBOXYPHOSPHONOENOLPYRUVATE PHOSPHONOMUTASE-LIKE PROTEIN (AFU_ORTHOLOGUE AFUA_5G07230)"/>
    <property type="match status" value="1"/>
</dbReference>
<dbReference type="PANTHER" id="PTHR42905">
    <property type="entry name" value="PHOSPHOENOLPYRUVATE CARBOXYLASE"/>
    <property type="match status" value="1"/>
</dbReference>
<dbReference type="Pfam" id="PF13714">
    <property type="entry name" value="PEP_mutase"/>
    <property type="match status" value="1"/>
</dbReference>
<dbReference type="SUPFAM" id="SSF51621">
    <property type="entry name" value="Phosphoenolpyruvate/pyruvate domain"/>
    <property type="match status" value="1"/>
</dbReference>
<name>Y1998_MYCTU</name>
<reference key="1">
    <citation type="journal article" date="1998" name="Nature">
        <title>Deciphering the biology of Mycobacterium tuberculosis from the complete genome sequence.</title>
        <authorList>
            <person name="Cole S.T."/>
            <person name="Brosch R."/>
            <person name="Parkhill J."/>
            <person name="Garnier T."/>
            <person name="Churcher C.M."/>
            <person name="Harris D.E."/>
            <person name="Gordon S.V."/>
            <person name="Eiglmeier K."/>
            <person name="Gas S."/>
            <person name="Barry C.E. III"/>
            <person name="Tekaia F."/>
            <person name="Badcock K."/>
            <person name="Basham D."/>
            <person name="Brown D."/>
            <person name="Chillingworth T."/>
            <person name="Connor R."/>
            <person name="Davies R.M."/>
            <person name="Devlin K."/>
            <person name="Feltwell T."/>
            <person name="Gentles S."/>
            <person name="Hamlin N."/>
            <person name="Holroyd S."/>
            <person name="Hornsby T."/>
            <person name="Jagels K."/>
            <person name="Krogh A."/>
            <person name="McLean J."/>
            <person name="Moule S."/>
            <person name="Murphy L.D."/>
            <person name="Oliver S."/>
            <person name="Osborne J."/>
            <person name="Quail M.A."/>
            <person name="Rajandream M.A."/>
            <person name="Rogers J."/>
            <person name="Rutter S."/>
            <person name="Seeger K."/>
            <person name="Skelton S."/>
            <person name="Squares S."/>
            <person name="Squares R."/>
            <person name="Sulston J.E."/>
            <person name="Taylor K."/>
            <person name="Whitehead S."/>
            <person name="Barrell B.G."/>
        </authorList>
    </citation>
    <scope>NUCLEOTIDE SEQUENCE [LARGE SCALE GENOMIC DNA]</scope>
    <source>
        <strain>ATCC 25618 / H37Rv</strain>
    </source>
</reference>
<reference key="2">
    <citation type="journal article" date="2001" name="Proc. Natl. Acad. Sci. U.S.A.">
        <title>Regulation of the Mycobacterium tuberculosis hypoxic response gene encoding alpha -crystallin.</title>
        <authorList>
            <person name="Sherman D.R."/>
            <person name="Voskuil M."/>
            <person name="Schnappinger D."/>
            <person name="Liao R."/>
            <person name="Harrell M.I."/>
            <person name="Schoolnik G.K."/>
        </authorList>
    </citation>
    <scope>INDUCTION BY HYPOXIA</scope>
    <source>
        <strain>ATCC 25618 / H37Rv</strain>
    </source>
</reference>
<reference key="3">
    <citation type="journal article" date="2003" name="J. Exp. Med.">
        <title>Inhibition of respiration by nitric oxide induces a Mycobacterium tuberculosis dormancy program.</title>
        <authorList>
            <person name="Voskuil M.I."/>
            <person name="Schnappinger D."/>
            <person name="Visconti K.C."/>
            <person name="Harrell M.I."/>
            <person name="Dolganov G.M."/>
            <person name="Sherman D.R."/>
            <person name="Schoolnik G.K."/>
        </authorList>
    </citation>
    <scope>INDUCTION BY NITRIC OXIDE (NO) AND BY HYPOXIA</scope>
    <scope>DORMANCY REGULON</scope>
    <source>
        <strain>ATCC 25618 / H37Rv</strain>
    </source>
</reference>
<reference key="4">
    <citation type="journal article" date="2011" name="Mol. Cell. Proteomics">
        <title>Proteogenomic analysis of Mycobacterium tuberculosis by high resolution mass spectrometry.</title>
        <authorList>
            <person name="Kelkar D.S."/>
            <person name="Kumar D."/>
            <person name="Kumar P."/>
            <person name="Balakrishnan L."/>
            <person name="Muthusamy B."/>
            <person name="Yadav A.K."/>
            <person name="Shrivastava P."/>
            <person name="Marimuthu A."/>
            <person name="Anand S."/>
            <person name="Sundaram H."/>
            <person name="Kingsbury R."/>
            <person name="Harsha H.C."/>
            <person name="Nair B."/>
            <person name="Prasad T.S."/>
            <person name="Chauhan D.S."/>
            <person name="Katoch K."/>
            <person name="Katoch V.M."/>
            <person name="Kumar P."/>
            <person name="Chaerkady R."/>
            <person name="Ramachandran S."/>
            <person name="Dash D."/>
            <person name="Pandey A."/>
        </authorList>
    </citation>
    <scope>IDENTIFICATION BY MASS SPECTROMETRY [LARGE SCALE ANALYSIS]</scope>
    <source>
        <strain>ATCC 25618 / H37Rv</strain>
    </source>
</reference>
<gene>
    <name type="ordered locus">Rv1998c</name>
    <name type="ORF">MTCY39.20</name>
</gene>
<feature type="chain" id="PRO_0000103926" description="Uncharacterized protein Rv1998c">
    <location>
        <begin position="1"/>
        <end position="258"/>
    </location>
</feature>
<comment type="induction">
    <text evidence="1 2">A member of the dormancy regulon. Induced in response to reduced oxygen tension (hypoxia) and low levels of nitric oxide (NO). It is hoped that this regulon will give insight into the latent, or dormant phase of infection.</text>
</comment>